<comment type="function">
    <text evidence="1">Catalyzes the transfer of acetyl from acetyl-CoA to desacetylmycothiol (Cys-GlcN-Ins) to form mycothiol.</text>
</comment>
<comment type="catalytic activity">
    <reaction evidence="1">
        <text>1D-myo-inositol 2-(L-cysteinylamino)-2-deoxy-alpha-D-glucopyranoside + acetyl-CoA = mycothiol + CoA + H(+)</text>
        <dbReference type="Rhea" id="RHEA:26172"/>
        <dbReference type="ChEBI" id="CHEBI:15378"/>
        <dbReference type="ChEBI" id="CHEBI:16768"/>
        <dbReference type="ChEBI" id="CHEBI:57287"/>
        <dbReference type="ChEBI" id="CHEBI:57288"/>
        <dbReference type="ChEBI" id="CHEBI:58887"/>
        <dbReference type="EC" id="2.3.1.189"/>
    </reaction>
</comment>
<comment type="subunit">
    <text evidence="1">Monomer.</text>
</comment>
<comment type="similarity">
    <text evidence="1">Belongs to the acetyltransferase family. MshD subfamily.</text>
</comment>
<sequence length="354" mass="38639">MMVDNQTPDSSTLSTASTPVYAEPQLTEELLERFDSFAQKVARHDGVSAFSEQTRIELSKALRESTLTPPRFFVAEDNGTLAAVFVALTPANDEDTGVIEAAVAPEYRGQGVGSAFFDHAVRQLGDDATRYRLWVHGSATDTGIESPAHAFATLHGFEPVRVLYKMVLPLDAQTREELVERSDARTLPENLRMRTFTGADEFPWLRVNAAAFAHHPEQGKLTLADLRERTGSPWFRPEGFFIASEVEDDSAIAAFTWTKIPTGQEQSELSPSGEIYVVGVNPQAQGGGLGRTLTLRALAYLACAEDENGEPLRAIDLYVDADNTAAYSLYTSLGFGVATVDRMYAPAQQDEPAA</sequence>
<protein>
    <recommendedName>
        <fullName evidence="1">Mycothiol acetyltransferase</fullName>
        <shortName evidence="1">MSH acetyltransferase</shortName>
        <ecNumber evidence="1">2.3.1.189</ecNumber>
    </recommendedName>
    <alternativeName>
        <fullName evidence="1">Mycothiol synthase</fullName>
    </alternativeName>
</protein>
<feature type="chain" id="PRO_0000400293" description="Mycothiol acetyltransferase">
    <location>
        <begin position="1"/>
        <end position="354"/>
    </location>
</feature>
<feature type="domain" description="N-acetyltransferase 1" evidence="1">
    <location>
        <begin position="21"/>
        <end position="176"/>
    </location>
</feature>
<feature type="domain" description="N-acetyltransferase 2" evidence="1">
    <location>
        <begin position="191"/>
        <end position="354"/>
    </location>
</feature>
<feature type="region of interest" description="Disordered" evidence="2">
    <location>
        <begin position="1"/>
        <end position="21"/>
    </location>
</feature>
<feature type="compositionally biased region" description="Polar residues" evidence="2">
    <location>
        <begin position="1"/>
        <end position="18"/>
    </location>
</feature>
<feature type="binding site" evidence="1">
    <location>
        <position position="52"/>
    </location>
    <ligand>
        <name>1D-myo-inositol 2-(L-cysteinylamino)-2-deoxy-alpha-D-glucopyranoside</name>
        <dbReference type="ChEBI" id="CHEBI:58887"/>
    </ligand>
</feature>
<feature type="binding site" evidence="1">
    <location>
        <begin position="101"/>
        <end position="103"/>
    </location>
    <ligand>
        <name>acetyl-CoA</name>
        <dbReference type="ChEBI" id="CHEBI:57288"/>
        <label>1</label>
    </ligand>
</feature>
<feature type="binding site" evidence="1">
    <location>
        <position position="217"/>
    </location>
    <ligand>
        <name>1D-myo-inositol 2-(L-cysteinylamino)-2-deoxy-alpha-D-glucopyranoside</name>
        <dbReference type="ChEBI" id="CHEBI:58887"/>
    </ligand>
</feature>
<feature type="binding site" evidence="1">
    <location>
        <position position="259"/>
    </location>
    <ligand>
        <name>1D-myo-inositol 2-(L-cysteinylamino)-2-deoxy-alpha-D-glucopyranoside</name>
        <dbReference type="ChEBI" id="CHEBI:58887"/>
    </ligand>
</feature>
<feature type="binding site" evidence="1">
    <location>
        <position position="274"/>
    </location>
    <ligand>
        <name>1D-myo-inositol 2-(L-cysteinylamino)-2-deoxy-alpha-D-glucopyranoside</name>
        <dbReference type="ChEBI" id="CHEBI:58887"/>
    </ligand>
</feature>
<feature type="binding site" evidence="1">
    <location>
        <begin position="278"/>
        <end position="280"/>
    </location>
    <ligand>
        <name>acetyl-CoA</name>
        <dbReference type="ChEBI" id="CHEBI:57288"/>
        <label>2</label>
    </ligand>
</feature>
<feature type="binding site" evidence="1">
    <location>
        <begin position="285"/>
        <end position="291"/>
    </location>
    <ligand>
        <name>acetyl-CoA</name>
        <dbReference type="ChEBI" id="CHEBI:57288"/>
        <label>2</label>
    </ligand>
</feature>
<feature type="binding site" evidence="1">
    <location>
        <position position="318"/>
    </location>
    <ligand>
        <name>1D-myo-inositol 2-(L-cysteinylamino)-2-deoxy-alpha-D-glucopyranoside</name>
        <dbReference type="ChEBI" id="CHEBI:58887"/>
    </ligand>
</feature>
<organism>
    <name type="scientific">Rothia mucilaginosa (strain DY-18)</name>
    <name type="common">Stomatococcus mucilaginosus</name>
    <dbReference type="NCBI Taxonomy" id="680646"/>
    <lineage>
        <taxon>Bacteria</taxon>
        <taxon>Bacillati</taxon>
        <taxon>Actinomycetota</taxon>
        <taxon>Actinomycetes</taxon>
        <taxon>Micrococcales</taxon>
        <taxon>Micrococcaceae</taxon>
        <taxon>Rothia</taxon>
    </lineage>
</organism>
<proteinExistence type="inferred from homology"/>
<keyword id="KW-0012">Acyltransferase</keyword>
<keyword id="KW-1185">Reference proteome</keyword>
<keyword id="KW-0677">Repeat</keyword>
<keyword id="KW-0808">Transferase</keyword>
<name>MSHD_ROTMD</name>
<evidence type="ECO:0000255" key="1">
    <source>
        <dbReference type="HAMAP-Rule" id="MF_01698"/>
    </source>
</evidence>
<evidence type="ECO:0000256" key="2">
    <source>
        <dbReference type="SAM" id="MobiDB-lite"/>
    </source>
</evidence>
<dbReference type="EC" id="2.3.1.189" evidence="1"/>
<dbReference type="EMBL" id="AP011540">
    <property type="protein sequence ID" value="BAI64248.1"/>
    <property type="molecule type" value="Genomic_DNA"/>
</dbReference>
<dbReference type="RefSeq" id="WP_012903004.1">
    <property type="nucleotide sequence ID" value="NC_013715.1"/>
</dbReference>
<dbReference type="SMR" id="D2NRH2"/>
<dbReference type="STRING" id="680646.RMDY18_04160"/>
<dbReference type="KEGG" id="rmu:RMDY18_04160"/>
<dbReference type="eggNOG" id="COG0456">
    <property type="taxonomic scope" value="Bacteria"/>
</dbReference>
<dbReference type="HOGENOM" id="CLU_068014_0_0_11"/>
<dbReference type="Proteomes" id="UP000001883">
    <property type="component" value="Chromosome"/>
</dbReference>
<dbReference type="GO" id="GO:0035447">
    <property type="term" value="F:mycothiol synthase activity"/>
    <property type="evidence" value="ECO:0007669"/>
    <property type="project" value="UniProtKB-UniRule"/>
</dbReference>
<dbReference type="GO" id="GO:0010125">
    <property type="term" value="P:mycothiol biosynthetic process"/>
    <property type="evidence" value="ECO:0007669"/>
    <property type="project" value="UniProtKB-UniRule"/>
</dbReference>
<dbReference type="CDD" id="cd04301">
    <property type="entry name" value="NAT_SF"/>
    <property type="match status" value="2"/>
</dbReference>
<dbReference type="Gene3D" id="3.40.630.30">
    <property type="match status" value="1"/>
</dbReference>
<dbReference type="HAMAP" id="MF_01698">
    <property type="entry name" value="MshD"/>
    <property type="match status" value="1"/>
</dbReference>
<dbReference type="InterPro" id="IPR016181">
    <property type="entry name" value="Acyl_CoA_acyltransferase"/>
</dbReference>
<dbReference type="InterPro" id="IPR000182">
    <property type="entry name" value="GNAT_dom"/>
</dbReference>
<dbReference type="InterPro" id="IPR017813">
    <property type="entry name" value="Mycothiol_AcTrfase"/>
</dbReference>
<dbReference type="InterPro" id="IPR050680">
    <property type="entry name" value="YpeA/RimI_acetyltransf"/>
</dbReference>
<dbReference type="NCBIfam" id="TIGR03448">
    <property type="entry name" value="mycothiol_MshD"/>
    <property type="match status" value="1"/>
</dbReference>
<dbReference type="PANTHER" id="PTHR43420">
    <property type="entry name" value="ACETYLTRANSFERASE"/>
    <property type="match status" value="1"/>
</dbReference>
<dbReference type="Pfam" id="PF00583">
    <property type="entry name" value="Acetyltransf_1"/>
    <property type="match status" value="2"/>
</dbReference>
<dbReference type="PIRSF" id="PIRSF021524">
    <property type="entry name" value="MSH_acetyltransferase"/>
    <property type="match status" value="1"/>
</dbReference>
<dbReference type="SUPFAM" id="SSF55729">
    <property type="entry name" value="Acyl-CoA N-acyltransferases (Nat)"/>
    <property type="match status" value="1"/>
</dbReference>
<dbReference type="PROSITE" id="PS51186">
    <property type="entry name" value="GNAT"/>
    <property type="match status" value="2"/>
</dbReference>
<gene>
    <name evidence="1" type="primary">mshD</name>
    <name type="ordered locus">RMDY18_04160</name>
</gene>
<accession>D2NRH2</accession>
<reference key="1">
    <citation type="submission" date="2009-07" db="EMBL/GenBank/DDBJ databases">
        <title>Complete genome sequence of Rothia mucilaginosa DJ.</title>
        <authorList>
            <person name="Yamane K."/>
            <person name="Nambu T."/>
            <person name="Mashimo C."/>
            <person name="Sugimori C."/>
            <person name="Yamanaka T."/>
            <person name="Leung K."/>
            <person name="Fukushima H."/>
        </authorList>
    </citation>
    <scope>NUCLEOTIDE SEQUENCE [LARGE SCALE GENOMIC DNA]</scope>
    <source>
        <strain>DY-18</strain>
    </source>
</reference>